<gene>
    <name type="primary">vhuD</name>
    <name type="ordered locus">MK0627</name>
</gene>
<dbReference type="EC" id="1.12.99.-"/>
<dbReference type="EMBL" id="AE009439">
    <property type="protein sequence ID" value="AAM01842.1"/>
    <property type="molecule type" value="Genomic_DNA"/>
</dbReference>
<dbReference type="RefSeq" id="WP_011018997.1">
    <property type="nucleotide sequence ID" value="NC_003551.1"/>
</dbReference>
<dbReference type="FunCoup" id="Q8TXN5">
    <property type="interactions" value="2"/>
</dbReference>
<dbReference type="STRING" id="190192.MK0627"/>
<dbReference type="PaxDb" id="190192-MK0627"/>
<dbReference type="GeneID" id="1476728"/>
<dbReference type="KEGG" id="mka:MK0627"/>
<dbReference type="HOGENOM" id="CLU_095272_2_0_2"/>
<dbReference type="InParanoid" id="Q8TXN5"/>
<dbReference type="OrthoDB" id="371828at2157"/>
<dbReference type="Proteomes" id="UP000001826">
    <property type="component" value="Chromosome"/>
</dbReference>
<dbReference type="GO" id="GO:0051537">
    <property type="term" value="F:2 iron, 2 sulfur cluster binding"/>
    <property type="evidence" value="ECO:0007669"/>
    <property type="project" value="UniProtKB-KW"/>
</dbReference>
<dbReference type="GO" id="GO:0046872">
    <property type="term" value="F:metal ion binding"/>
    <property type="evidence" value="ECO:0007669"/>
    <property type="project" value="UniProtKB-KW"/>
</dbReference>
<dbReference type="GO" id="GO:0016491">
    <property type="term" value="F:oxidoreductase activity"/>
    <property type="evidence" value="ECO:0007669"/>
    <property type="project" value="UniProtKB-KW"/>
</dbReference>
<dbReference type="InterPro" id="IPR003813">
    <property type="entry name" value="MvhD/FlpD"/>
</dbReference>
<dbReference type="Pfam" id="PF02662">
    <property type="entry name" value="FlpD"/>
    <property type="match status" value="1"/>
</dbReference>
<reference key="1">
    <citation type="journal article" date="2002" name="Proc. Natl. Acad. Sci. U.S.A.">
        <title>The complete genome of hyperthermophile Methanopyrus kandleri AV19 and monophyly of archaeal methanogens.</title>
        <authorList>
            <person name="Slesarev A.I."/>
            <person name="Mezhevaya K.V."/>
            <person name="Makarova K.S."/>
            <person name="Polushin N.N."/>
            <person name="Shcherbinina O.V."/>
            <person name="Shakhova V.V."/>
            <person name="Belova G.I."/>
            <person name="Aravind L."/>
            <person name="Natale D.A."/>
            <person name="Rogozin I.B."/>
            <person name="Tatusov R.L."/>
            <person name="Wolf Y.I."/>
            <person name="Stetter K.O."/>
            <person name="Malykh A.G."/>
            <person name="Koonin E.V."/>
            <person name="Kozyavkin S.A."/>
        </authorList>
    </citation>
    <scope>NUCLEOTIDE SEQUENCE [LARGE SCALE GENOMIC DNA]</scope>
    <source>
        <strain>AV19 / DSM 6324 / JCM 9639 / NBRC 100938</strain>
    </source>
</reference>
<evidence type="ECO:0000250" key="1"/>
<evidence type="ECO:0000305" key="2"/>
<name>VHUD_METKA</name>
<feature type="chain" id="PRO_0000249590" description="F420-non-reducing hydrogenase vhu iron-sulfur subunit D">
    <location>
        <begin position="1"/>
        <end position="132"/>
    </location>
</feature>
<feature type="non-standard amino acid" description="Selenocysteine" evidence="1">
    <location>
        <position position="15"/>
    </location>
</feature>
<feature type="non-standard amino acid" description="Selenocysteine" evidence="1">
    <location>
        <position position="66"/>
    </location>
</feature>
<protein>
    <recommendedName>
        <fullName>F420-non-reducing hydrogenase vhu iron-sulfur subunit D</fullName>
        <ecNumber>1.12.99.-</ecNumber>
    </recommendedName>
</protein>
<proteinExistence type="inferred from homology"/>
<organism>
    <name type="scientific">Methanopyrus kandleri (strain AV19 / DSM 6324 / JCM 9639 / NBRC 100938)</name>
    <dbReference type="NCBI Taxonomy" id="190192"/>
    <lineage>
        <taxon>Archaea</taxon>
        <taxon>Methanobacteriati</taxon>
        <taxon>Methanobacteriota</taxon>
        <taxon>Methanomada group</taxon>
        <taxon>Methanopyri</taxon>
        <taxon>Methanopyrales</taxon>
        <taxon>Methanopyraceae</taxon>
        <taxon>Methanopyrus</taxon>
    </lineage>
</organism>
<sequence>MSEESVVVAFCCYEUGYGAADLAGTGRAQYPSSVRIVRVPCTGRVGIEHILTALAKGAWTVFVAGUKKGECSYEDGNLKCERRVQAAKKLLEELGIEPERVEIYFMSSAEADKFVAAVKEMHERAKELGPLA</sequence>
<comment type="cofactor">
    <cofactor evidence="1">
        <name>[2Fe-2S] cluster</name>
        <dbReference type="ChEBI" id="CHEBI:190135"/>
    </cofactor>
    <text evidence="1">Binds 1 [2Fe-2S] cluster.</text>
</comment>
<comment type="subunit">
    <text evidence="1">The F420-non-reducing hydrogenase vhu is composed of four subunits; VhuA, VhuD, VhuG and VhuU.</text>
</comment>
<comment type="similarity">
    <text evidence="2">Belongs to the MvhD/VhuD family.</text>
</comment>
<accession>Q8TXN5</accession>
<keyword id="KW-0001">2Fe-2S</keyword>
<keyword id="KW-0249">Electron transport</keyword>
<keyword id="KW-0408">Iron</keyword>
<keyword id="KW-0411">Iron-sulfur</keyword>
<keyword id="KW-0479">Metal-binding</keyword>
<keyword id="KW-0560">Oxidoreductase</keyword>
<keyword id="KW-1185">Reference proteome</keyword>
<keyword id="KW-0712">Selenocysteine</keyword>
<keyword id="KW-0813">Transport</keyword>